<reference key="1">
    <citation type="journal article" date="2008" name="BMC Genomics">
        <title>The genome of Aeromonas salmonicida subsp. salmonicida A449: insights into the evolution of a fish pathogen.</title>
        <authorList>
            <person name="Reith M.E."/>
            <person name="Singh R.K."/>
            <person name="Curtis B."/>
            <person name="Boyd J.M."/>
            <person name="Bouevitch A."/>
            <person name="Kimball J."/>
            <person name="Munholland J."/>
            <person name="Murphy C."/>
            <person name="Sarty D."/>
            <person name="Williams J."/>
            <person name="Nash J.H."/>
            <person name="Johnson S.C."/>
            <person name="Brown L.L."/>
        </authorList>
    </citation>
    <scope>NUCLEOTIDE SEQUENCE [LARGE SCALE GENOMIC DNA]</scope>
    <source>
        <strain>A449</strain>
    </source>
</reference>
<comment type="function">
    <text evidence="1">Involved in peptide bond synthesis. Stimulates efficient translation and peptide-bond synthesis on native or reconstituted 70S ribosomes in vitro. Probably functions indirectly by altering the affinity of the ribosome for aminoacyl-tRNA, thus increasing their reactivity as acceptors for peptidyl transferase.</text>
</comment>
<comment type="pathway">
    <text evidence="1">Protein biosynthesis; polypeptide chain elongation.</text>
</comment>
<comment type="subcellular location">
    <subcellularLocation>
        <location evidence="1">Cytoplasm</location>
    </subcellularLocation>
</comment>
<comment type="similarity">
    <text evidence="1">Belongs to the elongation factor P family.</text>
</comment>
<organism>
    <name type="scientific">Aeromonas salmonicida (strain A449)</name>
    <dbReference type="NCBI Taxonomy" id="382245"/>
    <lineage>
        <taxon>Bacteria</taxon>
        <taxon>Pseudomonadati</taxon>
        <taxon>Pseudomonadota</taxon>
        <taxon>Gammaproteobacteria</taxon>
        <taxon>Aeromonadales</taxon>
        <taxon>Aeromonadaceae</taxon>
        <taxon>Aeromonas</taxon>
    </lineage>
</organism>
<dbReference type="EMBL" id="CP000644">
    <property type="protein sequence ID" value="ABO89208.1"/>
    <property type="molecule type" value="Genomic_DNA"/>
</dbReference>
<dbReference type="RefSeq" id="WP_005317282.1">
    <property type="nucleotide sequence ID" value="NC_009348.1"/>
</dbReference>
<dbReference type="SMR" id="A4SJY6"/>
<dbReference type="STRING" id="29491.GCA_000820065_02552"/>
<dbReference type="GeneID" id="79878734"/>
<dbReference type="KEGG" id="asa:ASA_1086"/>
<dbReference type="eggNOG" id="COG0231">
    <property type="taxonomic scope" value="Bacteria"/>
</dbReference>
<dbReference type="HOGENOM" id="CLU_074944_2_1_6"/>
<dbReference type="UniPathway" id="UPA00345"/>
<dbReference type="Proteomes" id="UP000000225">
    <property type="component" value="Chromosome"/>
</dbReference>
<dbReference type="GO" id="GO:0005737">
    <property type="term" value="C:cytoplasm"/>
    <property type="evidence" value="ECO:0007669"/>
    <property type="project" value="UniProtKB-SubCell"/>
</dbReference>
<dbReference type="GO" id="GO:0003746">
    <property type="term" value="F:translation elongation factor activity"/>
    <property type="evidence" value="ECO:0007669"/>
    <property type="project" value="UniProtKB-UniRule"/>
</dbReference>
<dbReference type="GO" id="GO:0043043">
    <property type="term" value="P:peptide biosynthetic process"/>
    <property type="evidence" value="ECO:0007669"/>
    <property type="project" value="InterPro"/>
</dbReference>
<dbReference type="CDD" id="cd04470">
    <property type="entry name" value="S1_EF-P_repeat_1"/>
    <property type="match status" value="1"/>
</dbReference>
<dbReference type="FunFam" id="2.30.30.30:FF:000003">
    <property type="entry name" value="Elongation factor P"/>
    <property type="match status" value="1"/>
</dbReference>
<dbReference type="FunFam" id="2.40.50.140:FF:000004">
    <property type="entry name" value="Elongation factor P"/>
    <property type="match status" value="1"/>
</dbReference>
<dbReference type="FunFam" id="2.40.50.140:FF:000009">
    <property type="entry name" value="Elongation factor P"/>
    <property type="match status" value="1"/>
</dbReference>
<dbReference type="Gene3D" id="2.30.30.30">
    <property type="match status" value="1"/>
</dbReference>
<dbReference type="Gene3D" id="2.40.50.140">
    <property type="entry name" value="Nucleic acid-binding proteins"/>
    <property type="match status" value="2"/>
</dbReference>
<dbReference type="HAMAP" id="MF_00141">
    <property type="entry name" value="EF_P"/>
    <property type="match status" value="1"/>
</dbReference>
<dbReference type="InterPro" id="IPR015365">
    <property type="entry name" value="Elong-fact-P_C"/>
</dbReference>
<dbReference type="InterPro" id="IPR012340">
    <property type="entry name" value="NA-bd_OB-fold"/>
</dbReference>
<dbReference type="InterPro" id="IPR014722">
    <property type="entry name" value="Rib_uL2_dom2"/>
</dbReference>
<dbReference type="InterPro" id="IPR020599">
    <property type="entry name" value="Transl_elong_fac_P/YeiP"/>
</dbReference>
<dbReference type="InterPro" id="IPR013185">
    <property type="entry name" value="Transl_elong_KOW-like"/>
</dbReference>
<dbReference type="InterPro" id="IPR001059">
    <property type="entry name" value="Transl_elong_P/YeiP_cen"/>
</dbReference>
<dbReference type="InterPro" id="IPR011768">
    <property type="entry name" value="Transl_elongation_fac_P"/>
</dbReference>
<dbReference type="InterPro" id="IPR008991">
    <property type="entry name" value="Translation_prot_SH3-like_sf"/>
</dbReference>
<dbReference type="NCBIfam" id="TIGR00038">
    <property type="entry name" value="efp"/>
    <property type="match status" value="1"/>
</dbReference>
<dbReference type="NCBIfam" id="NF001810">
    <property type="entry name" value="PRK00529.1"/>
    <property type="match status" value="1"/>
</dbReference>
<dbReference type="PANTHER" id="PTHR30053">
    <property type="entry name" value="ELONGATION FACTOR P"/>
    <property type="match status" value="1"/>
</dbReference>
<dbReference type="PANTHER" id="PTHR30053:SF12">
    <property type="entry name" value="ELONGATION FACTOR P (EF-P) FAMILY PROTEIN"/>
    <property type="match status" value="1"/>
</dbReference>
<dbReference type="Pfam" id="PF01132">
    <property type="entry name" value="EFP"/>
    <property type="match status" value="1"/>
</dbReference>
<dbReference type="Pfam" id="PF08207">
    <property type="entry name" value="EFP_N"/>
    <property type="match status" value="1"/>
</dbReference>
<dbReference type="Pfam" id="PF09285">
    <property type="entry name" value="Elong-fact-P_C"/>
    <property type="match status" value="1"/>
</dbReference>
<dbReference type="PIRSF" id="PIRSF005901">
    <property type="entry name" value="EF-P"/>
    <property type="match status" value="1"/>
</dbReference>
<dbReference type="SMART" id="SM01185">
    <property type="entry name" value="EFP"/>
    <property type="match status" value="1"/>
</dbReference>
<dbReference type="SMART" id="SM00841">
    <property type="entry name" value="Elong-fact-P_C"/>
    <property type="match status" value="1"/>
</dbReference>
<dbReference type="SUPFAM" id="SSF50249">
    <property type="entry name" value="Nucleic acid-binding proteins"/>
    <property type="match status" value="2"/>
</dbReference>
<dbReference type="SUPFAM" id="SSF50104">
    <property type="entry name" value="Translation proteins SH3-like domain"/>
    <property type="match status" value="1"/>
</dbReference>
<accession>A4SJY6</accession>
<protein>
    <recommendedName>
        <fullName evidence="1">Elongation factor P</fullName>
        <shortName evidence="1">EF-P</shortName>
    </recommendedName>
</protein>
<name>EFP_AERS4</name>
<keyword id="KW-0963">Cytoplasm</keyword>
<keyword id="KW-0251">Elongation factor</keyword>
<keyword id="KW-0648">Protein biosynthesis</keyword>
<gene>
    <name evidence="1" type="primary">efp</name>
    <name type="ordered locus">ASA_1086</name>
</gene>
<evidence type="ECO:0000255" key="1">
    <source>
        <dbReference type="HAMAP-Rule" id="MF_00141"/>
    </source>
</evidence>
<sequence>MKTAQEIRAGNVVMIGTEPMVVQKAEFNKSGRNSAVVKMKLKGLLNGSATETVFKADDKLDVVQLERKECTYSYFSDPLYVFMDTEYNQYDVEKDNLGDVLNYLVDGMEDICEVTFYNEKAISVELPTTIVREVEYTEPAARGDTSGKVTKPARLKGTAYELAVAAFVEIGDKIEIDSRTGEFKRRLS</sequence>
<proteinExistence type="inferred from homology"/>
<feature type="chain" id="PRO_1000010672" description="Elongation factor P">
    <location>
        <begin position="1"/>
        <end position="188"/>
    </location>
</feature>